<comment type="function">
    <text evidence="2 3">Cleaves a beta-phosphate from the diphosphate groups in PP-InsP5 (diphosphoinositol pentakisphosphate) and [PP]2-InsP4 (bisdiphosphoinositol tetrakisphosphate), suggesting that it may play a role in signal transduction (By similarity). InsP6 (inositol hexakisphosphate) is not a substrate (By similarity). Also able to catalyze the hydrolysis of dinucleoside oligophosphates, with diadenosine 5',5'''-P1,P6-hexaphosphate (Ap6A) and diadenosine 5',5'''- P1,P5-pentaphosphate (Ap5A) being the preferred substrates (By similarity). The major reaction products are ADP and p4a from Ap6A and ADP and ATP from Ap5A (By similarity). Also able to hydrolyze 5- phosphoribose 1-diphosphate (By similarity). Acts as a decapping enzyme that can hydrolyze both monomethylated and unmethylated capped RNAs (By similarity). Hydrolyzes monomethylated capped RNA after both the alpha- and beta-phosphates generating m7GMP + ppRNA and m7GDP + pRNA (By similarity). Modulates the stability of a subset of mRNAs implicated in cell motility (By similarity). Divalent cations zinc, magnesium and manganese determine its substrate specificity (By similarity). Exhibits diphosphoinositol polyphosphate phosphohydrolase in the presence of magnesium ions, diadenosine hexaphosphate hydrolase activity in the presence of manganese ions and endopolyphosphatase activity in the presence of zinc ions (By similarity). Plays an important role in limiting DNA damage and maintaining cell survival upon oxidative stress via its endopolyphosphatase activity (By similarity).</text>
</comment>
<comment type="catalytic activity">
    <reaction evidence="2">
        <text>diphospho-myo-inositol polyphosphate + H2O = myo-inositol polyphosphate + phosphate.</text>
        <dbReference type="EC" id="3.6.1.52"/>
    </reaction>
</comment>
<comment type="catalytic activity">
    <reaction evidence="2">
        <text>5-diphospho-1D-myo-inositol 1,2,3,4,6-pentakisphosphate + H2O = 1D-myo-inositol hexakisphosphate + phosphate + H(+)</text>
        <dbReference type="Rhea" id="RHEA:22384"/>
        <dbReference type="ChEBI" id="CHEBI:15377"/>
        <dbReference type="ChEBI" id="CHEBI:15378"/>
        <dbReference type="ChEBI" id="CHEBI:43474"/>
        <dbReference type="ChEBI" id="CHEBI:58130"/>
        <dbReference type="ChEBI" id="CHEBI:58628"/>
        <dbReference type="EC" id="3.6.1.52"/>
    </reaction>
</comment>
<comment type="catalytic activity">
    <reaction evidence="2">
        <text>3,5-bis(diphospho)-1D-myo-inositol 1,2,4,6-tetrakisphosphate + H2O = 3-diphospho-1D-myo-inositol 1,2,4,5,6-pentakisphosphate + phosphate + 2 H(+)</text>
        <dbReference type="Rhea" id="RHEA:56312"/>
        <dbReference type="ChEBI" id="CHEBI:15377"/>
        <dbReference type="ChEBI" id="CHEBI:15378"/>
        <dbReference type="ChEBI" id="CHEBI:43474"/>
        <dbReference type="ChEBI" id="CHEBI:140372"/>
        <dbReference type="ChEBI" id="CHEBI:140374"/>
        <dbReference type="EC" id="3.6.1.52"/>
    </reaction>
</comment>
<comment type="catalytic activity">
    <reaction evidence="2">
        <text>[phosphate](n+1) + n H2O = (n+1) phosphate + n H(+)</text>
        <dbReference type="Rhea" id="RHEA:22452"/>
        <dbReference type="Rhea" id="RHEA-COMP:14280"/>
        <dbReference type="ChEBI" id="CHEBI:15377"/>
        <dbReference type="ChEBI" id="CHEBI:15378"/>
        <dbReference type="ChEBI" id="CHEBI:16838"/>
        <dbReference type="ChEBI" id="CHEBI:43474"/>
        <dbReference type="EC" id="3.6.1.10"/>
    </reaction>
</comment>
<comment type="catalytic activity">
    <reaction evidence="2">
        <text>P(1),P(5)-bis(5'-adenosyl) pentaphosphate + H2O = ADP + ATP + 2 H(+)</text>
        <dbReference type="Rhea" id="RHEA:30527"/>
        <dbReference type="ChEBI" id="CHEBI:15377"/>
        <dbReference type="ChEBI" id="CHEBI:15378"/>
        <dbReference type="ChEBI" id="CHEBI:30616"/>
        <dbReference type="ChEBI" id="CHEBI:62041"/>
        <dbReference type="ChEBI" id="CHEBI:456216"/>
        <dbReference type="EC" id="3.6.1.61"/>
    </reaction>
</comment>
<comment type="catalytic activity">
    <reaction evidence="2">
        <text>P(1),P(6)-bis(5'-adenosyl) hexaphosphate + H2O = 2 ATP + 2 H(+)</text>
        <dbReference type="Rhea" id="RHEA:32043"/>
        <dbReference type="ChEBI" id="CHEBI:15377"/>
        <dbReference type="ChEBI" id="CHEBI:15378"/>
        <dbReference type="ChEBI" id="CHEBI:30616"/>
        <dbReference type="ChEBI" id="CHEBI:63740"/>
        <dbReference type="EC" id="3.6.1.61"/>
    </reaction>
</comment>
<comment type="catalytic activity">
    <reaction evidence="2">
        <text>P(1),P(4)-bis(5'-adenosyl) tetraphosphate + H2O = AMP + ATP + 2 H(+)</text>
        <dbReference type="Rhea" id="RHEA:32039"/>
        <dbReference type="ChEBI" id="CHEBI:15377"/>
        <dbReference type="ChEBI" id="CHEBI:15378"/>
        <dbReference type="ChEBI" id="CHEBI:30616"/>
        <dbReference type="ChEBI" id="CHEBI:58141"/>
        <dbReference type="ChEBI" id="CHEBI:456215"/>
        <dbReference type="EC" id="3.6.1.61"/>
    </reaction>
</comment>
<comment type="catalytic activity">
    <reaction evidence="4">
        <text>a 5'-end (N(7)-methyl 5'-triphosphoguanosine)-ribonucleoside in mRNA + H2O = N(7)-methyl-GMP + a 5'-end diphospho-ribonucleoside in mRNA + 2 H(+)</text>
        <dbReference type="Rhea" id="RHEA:65388"/>
        <dbReference type="Rhea" id="RHEA-COMP:17165"/>
        <dbReference type="Rhea" id="RHEA-COMP:17167"/>
        <dbReference type="ChEBI" id="CHEBI:15377"/>
        <dbReference type="ChEBI" id="CHEBI:15378"/>
        <dbReference type="ChEBI" id="CHEBI:58285"/>
        <dbReference type="ChEBI" id="CHEBI:156461"/>
        <dbReference type="ChEBI" id="CHEBI:167616"/>
        <dbReference type="EC" id="3.6.1.59"/>
    </reaction>
</comment>
<comment type="catalytic activity">
    <reaction evidence="4">
        <text>a 5'-end (N(7)-methyl 5'-triphosphoguanosine)-ribonucleoside in mRNA + H2O = N(7)-methyl-GDP + a 5'-end phospho-ribonucleoside in mRNA + 2 H(+)</text>
        <dbReference type="Rhea" id="RHEA:67484"/>
        <dbReference type="Rhea" id="RHEA-COMP:15692"/>
        <dbReference type="Rhea" id="RHEA-COMP:17167"/>
        <dbReference type="ChEBI" id="CHEBI:15377"/>
        <dbReference type="ChEBI" id="CHEBI:15378"/>
        <dbReference type="ChEBI" id="CHEBI:63714"/>
        <dbReference type="ChEBI" id="CHEBI:138282"/>
        <dbReference type="ChEBI" id="CHEBI:156461"/>
        <dbReference type="EC" id="3.6.1.62"/>
    </reaction>
</comment>
<comment type="cofactor">
    <cofactor evidence="2">
        <name>Mg(2+)</name>
        <dbReference type="ChEBI" id="CHEBI:18420"/>
    </cofactor>
    <cofactor evidence="2">
        <name>Mn(2+)</name>
        <dbReference type="ChEBI" id="CHEBI:29035"/>
    </cofactor>
    <cofactor evidence="2">
        <name>Zn(2+)</name>
        <dbReference type="ChEBI" id="CHEBI:29105"/>
    </cofactor>
    <text evidence="2">Binds 3 Mg(2+) ions per subunit.</text>
</comment>
<comment type="subunit">
    <text evidence="3">Monomer.</text>
</comment>
<comment type="subcellular location">
    <subcellularLocation>
        <location evidence="2">Cytoplasm</location>
    </subcellularLocation>
    <subcellularLocation>
        <location evidence="2">Nucleus</location>
    </subcellularLocation>
</comment>
<comment type="similarity">
    <text evidence="6">Belongs to the Nudix hydrolase family. DIPP subfamily.</text>
</comment>
<name>NUDT3_BOVIN</name>
<organism>
    <name type="scientific">Bos taurus</name>
    <name type="common">Bovine</name>
    <dbReference type="NCBI Taxonomy" id="9913"/>
    <lineage>
        <taxon>Eukaryota</taxon>
        <taxon>Metazoa</taxon>
        <taxon>Chordata</taxon>
        <taxon>Craniata</taxon>
        <taxon>Vertebrata</taxon>
        <taxon>Euteleostomi</taxon>
        <taxon>Mammalia</taxon>
        <taxon>Eutheria</taxon>
        <taxon>Laurasiatheria</taxon>
        <taxon>Artiodactyla</taxon>
        <taxon>Ruminantia</taxon>
        <taxon>Pecora</taxon>
        <taxon>Bovidae</taxon>
        <taxon>Bovinae</taxon>
        <taxon>Bos</taxon>
    </lineage>
</organism>
<accession>A2VE79</accession>
<gene>
    <name evidence="2" type="primary">NUDT3</name>
    <name type="synonym">DIPP1</name>
</gene>
<reference key="1">
    <citation type="submission" date="2007-02" db="EMBL/GenBank/DDBJ databases">
        <authorList>
            <consortium name="NIH - Mammalian Gene Collection (MGC) project"/>
        </authorList>
    </citation>
    <scope>NUCLEOTIDE SEQUENCE [LARGE SCALE MRNA]</scope>
    <source>
        <strain>Hereford</strain>
        <tissue>Fetal lung</tissue>
    </source>
</reference>
<proteinExistence type="evidence at transcript level"/>
<keyword id="KW-0007">Acetylation</keyword>
<keyword id="KW-0963">Cytoplasm</keyword>
<keyword id="KW-0378">Hydrolase</keyword>
<keyword id="KW-0460">Magnesium</keyword>
<keyword id="KW-0479">Metal-binding</keyword>
<keyword id="KW-0539">Nucleus</keyword>
<keyword id="KW-1185">Reference proteome</keyword>
<sequence length="172" mass="19362">MMKLKSNQTRTYDGDGYKKRAACLCFRSESEEEVLLVSSSRHPDRWIVPGGGMEPEEEPGTAAVREVCEEAGVKGTLGRLVGIFENQERKHRTYVYVLIVTEVLEDWEDSVSIGRKREWFKIEDAINVLQCHKPVQASYFETLRQGYSANNGTPLVAPTYSVSAQSSMPGIR</sequence>
<feature type="chain" id="PRO_0000297487" description="Diphosphoinositol polyphosphate phosphohydrolase 1">
    <location>
        <begin position="1"/>
        <end position="172"/>
    </location>
</feature>
<feature type="domain" description="Nudix hydrolase" evidence="5">
    <location>
        <begin position="17"/>
        <end position="144"/>
    </location>
</feature>
<feature type="short sequence motif" description="Nudix box">
    <location>
        <begin position="51"/>
        <end position="72"/>
    </location>
</feature>
<feature type="active site" description="Proton acceptor" evidence="1">
    <location>
        <position position="69"/>
    </location>
</feature>
<feature type="binding site" evidence="2">
    <location>
        <position position="10"/>
    </location>
    <ligand>
        <name>substrate</name>
    </ligand>
</feature>
<feature type="binding site" evidence="2">
    <location>
        <begin position="18"/>
        <end position="20"/>
    </location>
    <ligand>
        <name>substrate</name>
    </ligand>
</feature>
<feature type="binding site" evidence="2">
    <location>
        <begin position="39"/>
        <end position="41"/>
    </location>
    <ligand>
        <name>substrate</name>
    </ligand>
</feature>
<feature type="binding site" evidence="2">
    <location>
        <position position="50"/>
    </location>
    <ligand>
        <name>Mg(2+)</name>
        <dbReference type="ChEBI" id="CHEBI:18420"/>
        <label>1</label>
    </ligand>
</feature>
<feature type="binding site" evidence="2">
    <location>
        <position position="66"/>
    </location>
    <ligand>
        <name>Mg(2+)</name>
        <dbReference type="ChEBI" id="CHEBI:18420"/>
        <label>2</label>
    </ligand>
</feature>
<feature type="binding site" evidence="2">
    <location>
        <position position="66"/>
    </location>
    <ligand>
        <name>Mg(2+)</name>
        <dbReference type="ChEBI" id="CHEBI:18420"/>
        <label>3</label>
    </ligand>
</feature>
<feature type="binding site" evidence="2">
    <location>
        <position position="70"/>
    </location>
    <ligand>
        <name>Mg(2+)</name>
        <dbReference type="ChEBI" id="CHEBI:18420"/>
        <label>1</label>
    </ligand>
</feature>
<feature type="binding site" evidence="2">
    <location>
        <begin position="89"/>
        <end position="91"/>
    </location>
    <ligand>
        <name>substrate</name>
    </ligand>
</feature>
<feature type="binding site" evidence="2">
    <location>
        <position position="115"/>
    </location>
    <ligand>
        <name>substrate</name>
    </ligand>
</feature>
<feature type="binding site" evidence="2">
    <location>
        <position position="133"/>
    </location>
    <ligand>
        <name>substrate</name>
    </ligand>
</feature>
<feature type="modified residue" description="N-acetylmethionine" evidence="2">
    <location>
        <position position="1"/>
    </location>
</feature>
<evidence type="ECO:0000250" key="1"/>
<evidence type="ECO:0000250" key="2">
    <source>
        <dbReference type="UniProtKB" id="O95989"/>
    </source>
</evidence>
<evidence type="ECO:0000250" key="3">
    <source>
        <dbReference type="UniProtKB" id="Q566C7"/>
    </source>
</evidence>
<evidence type="ECO:0000250" key="4">
    <source>
        <dbReference type="UniProtKB" id="Q9JI46"/>
    </source>
</evidence>
<evidence type="ECO:0000255" key="5">
    <source>
        <dbReference type="PROSITE-ProRule" id="PRU00794"/>
    </source>
</evidence>
<evidence type="ECO:0000305" key="6"/>
<dbReference type="EC" id="3.6.1.52" evidence="2"/>
<dbReference type="EC" id="3.6.1.61" evidence="2"/>
<dbReference type="EC" id="3.6.1.10" evidence="2"/>
<dbReference type="EC" id="3.6.1.62" evidence="4"/>
<dbReference type="EC" id="3.6.1.59" evidence="4"/>
<dbReference type="EMBL" id="BC133614">
    <property type="protein sequence ID" value="AAI33615.1"/>
    <property type="molecule type" value="mRNA"/>
</dbReference>
<dbReference type="RefSeq" id="NP_001075935.1">
    <property type="nucleotide sequence ID" value="NM_001082466.2"/>
</dbReference>
<dbReference type="SMR" id="A2VE79"/>
<dbReference type="FunCoup" id="A2VE79">
    <property type="interactions" value="2929"/>
</dbReference>
<dbReference type="STRING" id="9913.ENSBTAP00000026239"/>
<dbReference type="PaxDb" id="9913-ENSBTAP00000026239"/>
<dbReference type="Ensembl" id="ENSBTAT00000026239.6">
    <property type="protein sequence ID" value="ENSBTAP00000026239.5"/>
    <property type="gene ID" value="ENSBTAG00000019684.7"/>
</dbReference>
<dbReference type="GeneID" id="618855"/>
<dbReference type="KEGG" id="bta:618855"/>
<dbReference type="CTD" id="11165"/>
<dbReference type="VEuPathDB" id="HostDB:ENSBTAG00000019684"/>
<dbReference type="VGNC" id="VGNC:32338">
    <property type="gene designation" value="NUDT3"/>
</dbReference>
<dbReference type="eggNOG" id="KOG2839">
    <property type="taxonomic scope" value="Eukaryota"/>
</dbReference>
<dbReference type="GeneTree" id="ENSGT00940000157882"/>
<dbReference type="HOGENOM" id="CLU_037162_1_0_1"/>
<dbReference type="InParanoid" id="A2VE79"/>
<dbReference type="OMA" id="WHEDKLN"/>
<dbReference type="OrthoDB" id="2011998at2759"/>
<dbReference type="TreeFam" id="TF106349"/>
<dbReference type="Reactome" id="R-BTA-1855167">
    <property type="pathway name" value="Synthesis of pyrophosphates in the cytosol"/>
</dbReference>
<dbReference type="Proteomes" id="UP000009136">
    <property type="component" value="Chromosome 23"/>
</dbReference>
<dbReference type="Bgee" id="ENSBTAG00000019684">
    <property type="expression patterns" value="Expressed in temporal cortex and 102 other cell types or tissues"/>
</dbReference>
<dbReference type="GO" id="GO:0005737">
    <property type="term" value="C:cytoplasm"/>
    <property type="evidence" value="ECO:0000250"/>
    <property type="project" value="UniProtKB"/>
</dbReference>
<dbReference type="GO" id="GO:0005829">
    <property type="term" value="C:cytosol"/>
    <property type="evidence" value="ECO:0007669"/>
    <property type="project" value="Ensembl"/>
</dbReference>
<dbReference type="GO" id="GO:0098978">
    <property type="term" value="C:glutamatergic synapse"/>
    <property type="evidence" value="ECO:0007669"/>
    <property type="project" value="Ensembl"/>
</dbReference>
<dbReference type="GO" id="GO:0005634">
    <property type="term" value="C:nucleus"/>
    <property type="evidence" value="ECO:0000250"/>
    <property type="project" value="UniProtKB"/>
</dbReference>
<dbReference type="GO" id="GO:0140932">
    <property type="term" value="F:5'-(N(7)-methyl 5'-triphosphoguanosine)-[mRNA] diphosphatase activity"/>
    <property type="evidence" value="ECO:0000250"/>
    <property type="project" value="UniProtKB"/>
</dbReference>
<dbReference type="GO" id="GO:0140933">
    <property type="term" value="F:5'-(N(7)-methylguanosine 5'-triphospho)-[mRNA] hydrolase activity"/>
    <property type="evidence" value="ECO:0000250"/>
    <property type="project" value="UniProtKB"/>
</dbReference>
<dbReference type="GO" id="GO:0034431">
    <property type="term" value="F:bis(5'-adenosyl)-hexaphosphatase activity"/>
    <property type="evidence" value="ECO:0000318"/>
    <property type="project" value="GO_Central"/>
</dbReference>
<dbReference type="GO" id="GO:0034432">
    <property type="term" value="F:bis(5'-adenosyl)-pentaphosphatase activity"/>
    <property type="evidence" value="ECO:0000318"/>
    <property type="project" value="GO_Central"/>
</dbReference>
<dbReference type="GO" id="GO:0008486">
    <property type="term" value="F:diphosphoinositol-polyphosphate diphosphatase activity"/>
    <property type="evidence" value="ECO:0000250"/>
    <property type="project" value="UniProtKB"/>
</dbReference>
<dbReference type="GO" id="GO:0000298">
    <property type="term" value="F:endopolyphosphatase activity"/>
    <property type="evidence" value="ECO:0000250"/>
    <property type="project" value="UniProtKB"/>
</dbReference>
<dbReference type="GO" id="GO:0052842">
    <property type="term" value="F:inositol diphosphate pentakisphosphate diphosphatase activity"/>
    <property type="evidence" value="ECO:0000250"/>
    <property type="project" value="UniProtKB"/>
</dbReference>
<dbReference type="GO" id="GO:0052840">
    <property type="term" value="F:inositol diphosphate tetrakisphosphate diphosphatase activity"/>
    <property type="evidence" value="ECO:0000250"/>
    <property type="project" value="UniProtKB"/>
</dbReference>
<dbReference type="GO" id="GO:0052848">
    <property type="term" value="F:inositol-3,5-bisdiphosphate-2,3,4,6-tetrakisphosphate 5-diphosphatase activity"/>
    <property type="evidence" value="ECO:0007669"/>
    <property type="project" value="RHEA"/>
</dbReference>
<dbReference type="GO" id="GO:0052845">
    <property type="term" value="F:inositol-5-diphosphate-1,2,3,4,6-pentakisphosphate diphosphatase activity"/>
    <property type="evidence" value="ECO:0007669"/>
    <property type="project" value="RHEA"/>
</dbReference>
<dbReference type="GO" id="GO:0000287">
    <property type="term" value="F:magnesium ion binding"/>
    <property type="evidence" value="ECO:0000250"/>
    <property type="project" value="UniProtKB"/>
</dbReference>
<dbReference type="GO" id="GO:0030145">
    <property type="term" value="F:manganese ion binding"/>
    <property type="evidence" value="ECO:0000250"/>
    <property type="project" value="UniProtKB"/>
</dbReference>
<dbReference type="GO" id="GO:0008270">
    <property type="term" value="F:zinc ion binding"/>
    <property type="evidence" value="ECO:0000250"/>
    <property type="project" value="UniProtKB"/>
</dbReference>
<dbReference type="GO" id="GO:1901911">
    <property type="term" value="P:adenosine 5'-(hexahydrogen pentaphosphate) catabolic process"/>
    <property type="evidence" value="ECO:0000318"/>
    <property type="project" value="GO_Central"/>
</dbReference>
<dbReference type="GO" id="GO:1901909">
    <property type="term" value="P:diadenosine hexaphosphate catabolic process"/>
    <property type="evidence" value="ECO:0000250"/>
    <property type="project" value="UniProtKB"/>
</dbReference>
<dbReference type="GO" id="GO:1901907">
    <property type="term" value="P:diadenosine pentaphosphate catabolic process"/>
    <property type="evidence" value="ECO:0000318"/>
    <property type="project" value="GO_Central"/>
</dbReference>
<dbReference type="GO" id="GO:0071544">
    <property type="term" value="P:diphosphoinositol polyphosphate catabolic process"/>
    <property type="evidence" value="ECO:0000250"/>
    <property type="project" value="UniProtKB"/>
</dbReference>
<dbReference type="GO" id="GO:0071543">
    <property type="term" value="P:diphosphoinositol polyphosphate metabolic process"/>
    <property type="evidence" value="ECO:0000318"/>
    <property type="project" value="GO_Central"/>
</dbReference>
<dbReference type="GO" id="GO:0110154">
    <property type="term" value="P:RNA decapping"/>
    <property type="evidence" value="ECO:0000250"/>
    <property type="project" value="UniProtKB"/>
</dbReference>
<dbReference type="CDD" id="cd04666">
    <property type="entry name" value="NUDIX_DIPP2_like_Nudt4"/>
    <property type="match status" value="1"/>
</dbReference>
<dbReference type="FunFam" id="3.90.79.10:FF:000002">
    <property type="entry name" value="diphosphoinositol polyphosphate phosphohydrolase 1"/>
    <property type="match status" value="1"/>
</dbReference>
<dbReference type="Gene3D" id="3.90.79.10">
    <property type="entry name" value="Nucleoside Triphosphate Pyrophosphohydrolase"/>
    <property type="match status" value="1"/>
</dbReference>
<dbReference type="InterPro" id="IPR047198">
    <property type="entry name" value="DDP-like_NUDIX"/>
</dbReference>
<dbReference type="InterPro" id="IPR015797">
    <property type="entry name" value="NUDIX_hydrolase-like_dom_sf"/>
</dbReference>
<dbReference type="InterPro" id="IPR020084">
    <property type="entry name" value="NUDIX_hydrolase_CS"/>
</dbReference>
<dbReference type="InterPro" id="IPR000086">
    <property type="entry name" value="NUDIX_hydrolase_dom"/>
</dbReference>
<dbReference type="PANTHER" id="PTHR12629">
    <property type="entry name" value="DIPHOSPHOINOSITOL POLYPHOSPHATE PHOSPHOHYDROLASE"/>
    <property type="match status" value="1"/>
</dbReference>
<dbReference type="PANTHER" id="PTHR12629:SF5">
    <property type="entry name" value="DIPHOSPHOINOSITOL POLYPHOSPHATE PHOSPHOHYDROLASE 1"/>
    <property type="match status" value="1"/>
</dbReference>
<dbReference type="Pfam" id="PF00293">
    <property type="entry name" value="NUDIX"/>
    <property type="match status" value="1"/>
</dbReference>
<dbReference type="SUPFAM" id="SSF55811">
    <property type="entry name" value="Nudix"/>
    <property type="match status" value="1"/>
</dbReference>
<dbReference type="PROSITE" id="PS51462">
    <property type="entry name" value="NUDIX"/>
    <property type="match status" value="1"/>
</dbReference>
<dbReference type="PROSITE" id="PS00893">
    <property type="entry name" value="NUDIX_BOX"/>
    <property type="match status" value="1"/>
</dbReference>
<protein>
    <recommendedName>
        <fullName evidence="2">Diphosphoinositol polyphosphate phosphohydrolase 1</fullName>
        <shortName>DIPP-1</shortName>
        <ecNumber evidence="2">3.6.1.52</ecNumber>
    </recommendedName>
    <alternativeName>
        <fullName>Diadenosine hexaphosphate hydrolase</fullName>
        <shortName>Ap6A hydrolase</shortName>
        <ecNumber evidence="2">3.6.1.61</ecNumber>
    </alternativeName>
    <alternativeName>
        <fullName>Endopolyphosphatase</fullName>
        <ecNumber evidence="2">3.6.1.10</ecNumber>
    </alternativeName>
    <alternativeName>
        <fullName>Nucleoside diphosphate-linked moiety X motif 3</fullName>
        <shortName>Nudix motif 3</shortName>
    </alternativeName>
    <alternativeName>
        <fullName>m7GpppN-mRNA hydrolase</fullName>
        <ecNumber evidence="4">3.6.1.62</ecNumber>
    </alternativeName>
    <alternativeName>
        <fullName>m7GpppX diphosphatase</fullName>
        <ecNumber evidence="4">3.6.1.59</ecNumber>
    </alternativeName>
</protein>